<geneLocation type="chloroplast"/>
<evidence type="ECO:0000250" key="1"/>
<evidence type="ECO:0000256" key="2">
    <source>
        <dbReference type="SAM" id="MobiDB-lite"/>
    </source>
</evidence>
<evidence type="ECO:0000305" key="3"/>
<name>RR4_LIRTU</name>
<protein>
    <recommendedName>
        <fullName evidence="3">Small ribosomal subunit protein uS4c</fullName>
    </recommendedName>
    <alternativeName>
        <fullName>30S ribosomal protein S4, chloroplastic</fullName>
    </alternativeName>
</protein>
<gene>
    <name type="primary">rps4</name>
</gene>
<reference key="1">
    <citation type="journal article" date="2006" name="BMC Evol. Biol.">
        <title>Complete plastid genome sequences of Drimys, Liriodendron, and Piper: implications for the phylogenetic relationships of magnoliids.</title>
        <authorList>
            <person name="Cai Z."/>
            <person name="Penaflor C."/>
            <person name="Kuehl J.V."/>
            <person name="Leebens-Mack J."/>
            <person name="Carlson J.E."/>
            <person name="dePamphilis C.W."/>
            <person name="Boore J.L."/>
            <person name="Jansen R.K."/>
        </authorList>
    </citation>
    <scope>NUCLEOTIDE SEQUENCE [LARGE SCALE GENOMIC DNA]</scope>
</reference>
<dbReference type="EMBL" id="DQ899947">
    <property type="protein sequence ID" value="ABI32511.1"/>
    <property type="molecule type" value="Genomic_DNA"/>
</dbReference>
<dbReference type="RefSeq" id="YP_740204.1">
    <property type="nucleotide sequence ID" value="NC_008326.1"/>
</dbReference>
<dbReference type="SMR" id="Q0G9L7"/>
<dbReference type="GeneID" id="4266621"/>
<dbReference type="GO" id="GO:0009507">
    <property type="term" value="C:chloroplast"/>
    <property type="evidence" value="ECO:0007669"/>
    <property type="project" value="UniProtKB-SubCell"/>
</dbReference>
<dbReference type="GO" id="GO:0015935">
    <property type="term" value="C:small ribosomal subunit"/>
    <property type="evidence" value="ECO:0007669"/>
    <property type="project" value="InterPro"/>
</dbReference>
<dbReference type="GO" id="GO:0019843">
    <property type="term" value="F:rRNA binding"/>
    <property type="evidence" value="ECO:0007669"/>
    <property type="project" value="UniProtKB-UniRule"/>
</dbReference>
<dbReference type="GO" id="GO:0003735">
    <property type="term" value="F:structural constituent of ribosome"/>
    <property type="evidence" value="ECO:0007669"/>
    <property type="project" value="InterPro"/>
</dbReference>
<dbReference type="GO" id="GO:0042274">
    <property type="term" value="P:ribosomal small subunit biogenesis"/>
    <property type="evidence" value="ECO:0007669"/>
    <property type="project" value="TreeGrafter"/>
</dbReference>
<dbReference type="GO" id="GO:0006412">
    <property type="term" value="P:translation"/>
    <property type="evidence" value="ECO:0007669"/>
    <property type="project" value="UniProtKB-UniRule"/>
</dbReference>
<dbReference type="CDD" id="cd00165">
    <property type="entry name" value="S4"/>
    <property type="match status" value="1"/>
</dbReference>
<dbReference type="FunFam" id="1.10.1050.10:FF:000002">
    <property type="entry name" value="30S ribosomal protein S4, chloroplastic"/>
    <property type="match status" value="1"/>
</dbReference>
<dbReference type="FunFam" id="3.10.290.10:FF:000081">
    <property type="entry name" value="30S ribosomal protein S4, chloroplastic"/>
    <property type="match status" value="1"/>
</dbReference>
<dbReference type="Gene3D" id="1.10.1050.10">
    <property type="entry name" value="Ribosomal Protein S4 Delta 41, Chain A, domain 1"/>
    <property type="match status" value="1"/>
</dbReference>
<dbReference type="Gene3D" id="3.10.290.10">
    <property type="entry name" value="RNA-binding S4 domain"/>
    <property type="match status" value="1"/>
</dbReference>
<dbReference type="HAMAP" id="MF_01306_B">
    <property type="entry name" value="Ribosomal_uS4_B"/>
    <property type="match status" value="1"/>
</dbReference>
<dbReference type="InterPro" id="IPR022801">
    <property type="entry name" value="Ribosomal_uS4"/>
</dbReference>
<dbReference type="InterPro" id="IPR005709">
    <property type="entry name" value="Ribosomal_uS4_bac-type"/>
</dbReference>
<dbReference type="InterPro" id="IPR018079">
    <property type="entry name" value="Ribosomal_uS4_CS"/>
</dbReference>
<dbReference type="InterPro" id="IPR001912">
    <property type="entry name" value="Ribosomal_uS4_N"/>
</dbReference>
<dbReference type="InterPro" id="IPR002942">
    <property type="entry name" value="S4_RNA-bd"/>
</dbReference>
<dbReference type="InterPro" id="IPR036986">
    <property type="entry name" value="S4_RNA-bd_sf"/>
</dbReference>
<dbReference type="NCBIfam" id="NF003717">
    <property type="entry name" value="PRK05327.1"/>
    <property type="match status" value="1"/>
</dbReference>
<dbReference type="NCBIfam" id="TIGR01017">
    <property type="entry name" value="rpsD_bact"/>
    <property type="match status" value="1"/>
</dbReference>
<dbReference type="PANTHER" id="PTHR11831">
    <property type="entry name" value="30S 40S RIBOSOMAL PROTEIN"/>
    <property type="match status" value="1"/>
</dbReference>
<dbReference type="PANTHER" id="PTHR11831:SF4">
    <property type="entry name" value="SMALL RIBOSOMAL SUBUNIT PROTEIN US4M"/>
    <property type="match status" value="1"/>
</dbReference>
<dbReference type="Pfam" id="PF00163">
    <property type="entry name" value="Ribosomal_S4"/>
    <property type="match status" value="1"/>
</dbReference>
<dbReference type="Pfam" id="PF01479">
    <property type="entry name" value="S4"/>
    <property type="match status" value="1"/>
</dbReference>
<dbReference type="SMART" id="SM01390">
    <property type="entry name" value="Ribosomal_S4"/>
    <property type="match status" value="1"/>
</dbReference>
<dbReference type="SMART" id="SM00363">
    <property type="entry name" value="S4"/>
    <property type="match status" value="1"/>
</dbReference>
<dbReference type="SUPFAM" id="SSF55174">
    <property type="entry name" value="Alpha-L RNA-binding motif"/>
    <property type="match status" value="1"/>
</dbReference>
<dbReference type="PROSITE" id="PS00632">
    <property type="entry name" value="RIBOSOMAL_S4"/>
    <property type="match status" value="1"/>
</dbReference>
<dbReference type="PROSITE" id="PS50889">
    <property type="entry name" value="S4"/>
    <property type="match status" value="1"/>
</dbReference>
<proteinExistence type="inferred from homology"/>
<keyword id="KW-0150">Chloroplast</keyword>
<keyword id="KW-0934">Plastid</keyword>
<keyword id="KW-0687">Ribonucleoprotein</keyword>
<keyword id="KW-0689">Ribosomal protein</keyword>
<keyword id="KW-0694">RNA-binding</keyword>
<keyword id="KW-0699">rRNA-binding</keyword>
<accession>Q0G9L7</accession>
<organism>
    <name type="scientific">Liriodendron tulipifera</name>
    <name type="common">Tuliptree</name>
    <name type="synonym">Tulip poplar</name>
    <dbReference type="NCBI Taxonomy" id="3415"/>
    <lineage>
        <taxon>Eukaryota</taxon>
        <taxon>Viridiplantae</taxon>
        <taxon>Streptophyta</taxon>
        <taxon>Embryophyta</taxon>
        <taxon>Tracheophyta</taxon>
        <taxon>Spermatophyta</taxon>
        <taxon>Magnoliopsida</taxon>
        <taxon>Magnoliidae</taxon>
        <taxon>Magnoliales</taxon>
        <taxon>Magnoliaceae</taxon>
        <taxon>Liriodendron</taxon>
    </lineage>
</organism>
<sequence>MSRYRGPRFKKIRRLGALPGLTSKRPRPGSDLRNQSRSGKRSQYRIRLEEKQKLRFHYGLTERQLLRYVRIAGKAKGSTGQVLLQLLEMRLDNILFRLGMASTIPGARQLVNHRHILVNGRIVDIPSYRCKPRDIITTRGEQRSRALIQNYIDSSPHEELAKHLTFHSSQYKGLVNQIIDSKWIGLKINELLVVEYYSRQT</sequence>
<comment type="function">
    <text evidence="1">One of the primary rRNA binding proteins, it binds directly to 16S rRNA where it nucleates assembly of the body of the 30S subunit.</text>
</comment>
<comment type="function">
    <text evidence="1">With S5 and S12 plays an important role in translational accuracy.</text>
</comment>
<comment type="subunit">
    <text evidence="1">Part of the 30S ribosomal subunit. Contacts protein S5. The interaction surface between S4 and S5 is involved in control of translational fidelity (By similarity).</text>
</comment>
<comment type="subcellular location">
    <subcellularLocation>
        <location>Plastid</location>
        <location>Chloroplast</location>
    </subcellularLocation>
</comment>
<comment type="similarity">
    <text evidence="3">Belongs to the universal ribosomal protein uS4 family.</text>
</comment>
<feature type="chain" id="PRO_0000277013" description="Small ribosomal subunit protein uS4c">
    <location>
        <begin position="1"/>
        <end position="201"/>
    </location>
</feature>
<feature type="domain" description="S4 RNA-binding">
    <location>
        <begin position="89"/>
        <end position="150"/>
    </location>
</feature>
<feature type="region of interest" description="Disordered" evidence="2">
    <location>
        <begin position="15"/>
        <end position="43"/>
    </location>
</feature>